<protein>
    <recommendedName>
        <fullName evidence="1">3-phosphoshikimate 1-carboxyvinyltransferase</fullName>
        <ecNumber evidence="1">2.5.1.19</ecNumber>
    </recommendedName>
    <alternativeName>
        <fullName evidence="1">5-enolpyruvylshikimate-3-phosphate synthase</fullName>
        <shortName evidence="1">EPSP synthase</shortName>
        <shortName evidence="1">EPSPS</shortName>
    </alternativeName>
</protein>
<comment type="function">
    <text evidence="1">Catalyzes the transfer of the enolpyruvyl moiety of phosphoenolpyruvate (PEP) to the 5-hydroxyl of shikimate-3-phosphate (S3P) to produce enolpyruvyl shikimate-3-phosphate and inorganic phosphate.</text>
</comment>
<comment type="catalytic activity">
    <reaction evidence="1">
        <text>3-phosphoshikimate + phosphoenolpyruvate = 5-O-(1-carboxyvinyl)-3-phosphoshikimate + phosphate</text>
        <dbReference type="Rhea" id="RHEA:21256"/>
        <dbReference type="ChEBI" id="CHEBI:43474"/>
        <dbReference type="ChEBI" id="CHEBI:57701"/>
        <dbReference type="ChEBI" id="CHEBI:58702"/>
        <dbReference type="ChEBI" id="CHEBI:145989"/>
        <dbReference type="EC" id="2.5.1.19"/>
    </reaction>
    <physiologicalReaction direction="left-to-right" evidence="1">
        <dbReference type="Rhea" id="RHEA:21257"/>
    </physiologicalReaction>
</comment>
<comment type="pathway">
    <text evidence="1">Metabolic intermediate biosynthesis; chorismate biosynthesis; chorismate from D-erythrose 4-phosphate and phosphoenolpyruvate: step 6/7.</text>
</comment>
<comment type="subunit">
    <text evidence="1">Monomer.</text>
</comment>
<comment type="subcellular location">
    <subcellularLocation>
        <location evidence="1">Cytoplasm</location>
    </subcellularLocation>
</comment>
<comment type="similarity">
    <text evidence="1">Belongs to the EPSP synthase family.</text>
</comment>
<feature type="chain" id="PRO_0000325396" description="3-phosphoshikimate 1-carboxyvinyltransferase">
    <location>
        <begin position="1"/>
        <end position="427"/>
    </location>
</feature>
<feature type="active site" description="Proton acceptor" evidence="1">
    <location>
        <position position="315"/>
    </location>
</feature>
<feature type="binding site" evidence="1">
    <location>
        <position position="22"/>
    </location>
    <ligand>
        <name>3-phosphoshikimate</name>
        <dbReference type="ChEBI" id="CHEBI:145989"/>
    </ligand>
</feature>
<feature type="binding site" evidence="1">
    <location>
        <position position="22"/>
    </location>
    <ligand>
        <name>phosphoenolpyruvate</name>
        <dbReference type="ChEBI" id="CHEBI:58702"/>
    </ligand>
</feature>
<feature type="binding site" evidence="1">
    <location>
        <position position="23"/>
    </location>
    <ligand>
        <name>3-phosphoshikimate</name>
        <dbReference type="ChEBI" id="CHEBI:145989"/>
    </ligand>
</feature>
<feature type="binding site" evidence="1">
    <location>
        <position position="27"/>
    </location>
    <ligand>
        <name>3-phosphoshikimate</name>
        <dbReference type="ChEBI" id="CHEBI:145989"/>
    </ligand>
</feature>
<feature type="binding site" evidence="1">
    <location>
        <position position="93"/>
    </location>
    <ligand>
        <name>phosphoenolpyruvate</name>
        <dbReference type="ChEBI" id="CHEBI:58702"/>
    </ligand>
</feature>
<feature type="binding site" evidence="1">
    <location>
        <position position="122"/>
    </location>
    <ligand>
        <name>phosphoenolpyruvate</name>
        <dbReference type="ChEBI" id="CHEBI:58702"/>
    </ligand>
</feature>
<feature type="binding site" evidence="1">
    <location>
        <position position="167"/>
    </location>
    <ligand>
        <name>3-phosphoshikimate</name>
        <dbReference type="ChEBI" id="CHEBI:145989"/>
    </ligand>
</feature>
<feature type="binding site" evidence="1">
    <location>
        <position position="169"/>
    </location>
    <ligand>
        <name>3-phosphoshikimate</name>
        <dbReference type="ChEBI" id="CHEBI:145989"/>
    </ligand>
</feature>
<feature type="binding site" evidence="1">
    <location>
        <position position="169"/>
    </location>
    <ligand>
        <name>phosphoenolpyruvate</name>
        <dbReference type="ChEBI" id="CHEBI:58702"/>
    </ligand>
</feature>
<feature type="binding site" evidence="1">
    <location>
        <position position="315"/>
    </location>
    <ligand>
        <name>3-phosphoshikimate</name>
        <dbReference type="ChEBI" id="CHEBI:145989"/>
    </ligand>
</feature>
<feature type="binding site" evidence="1">
    <location>
        <position position="342"/>
    </location>
    <ligand>
        <name>3-phosphoshikimate</name>
        <dbReference type="ChEBI" id="CHEBI:145989"/>
    </ligand>
</feature>
<feature type="binding site" evidence="1">
    <location>
        <position position="346"/>
    </location>
    <ligand>
        <name>phosphoenolpyruvate</name>
        <dbReference type="ChEBI" id="CHEBI:58702"/>
    </ligand>
</feature>
<feature type="binding site" evidence="1">
    <location>
        <position position="387"/>
    </location>
    <ligand>
        <name>phosphoenolpyruvate</name>
        <dbReference type="ChEBI" id="CHEBI:58702"/>
    </ligand>
</feature>
<evidence type="ECO:0000255" key="1">
    <source>
        <dbReference type="HAMAP-Rule" id="MF_00210"/>
    </source>
</evidence>
<dbReference type="EC" id="2.5.1.19" evidence="1"/>
<dbReference type="EMBL" id="AE017221">
    <property type="protein sequence ID" value="AAS80436.1"/>
    <property type="molecule type" value="Genomic_DNA"/>
</dbReference>
<dbReference type="RefSeq" id="WP_011172545.1">
    <property type="nucleotide sequence ID" value="NC_005835.1"/>
</dbReference>
<dbReference type="SMR" id="Q72LH1"/>
<dbReference type="KEGG" id="tth:TT_C0088"/>
<dbReference type="eggNOG" id="COG0128">
    <property type="taxonomic scope" value="Bacteria"/>
</dbReference>
<dbReference type="HOGENOM" id="CLU_024321_0_1_0"/>
<dbReference type="OrthoDB" id="9809920at2"/>
<dbReference type="UniPathway" id="UPA00053">
    <property type="reaction ID" value="UER00089"/>
</dbReference>
<dbReference type="Proteomes" id="UP000000592">
    <property type="component" value="Chromosome"/>
</dbReference>
<dbReference type="GO" id="GO:0005737">
    <property type="term" value="C:cytoplasm"/>
    <property type="evidence" value="ECO:0007669"/>
    <property type="project" value="UniProtKB-SubCell"/>
</dbReference>
<dbReference type="GO" id="GO:0003866">
    <property type="term" value="F:3-phosphoshikimate 1-carboxyvinyltransferase activity"/>
    <property type="evidence" value="ECO:0007669"/>
    <property type="project" value="UniProtKB-UniRule"/>
</dbReference>
<dbReference type="GO" id="GO:0008652">
    <property type="term" value="P:amino acid biosynthetic process"/>
    <property type="evidence" value="ECO:0007669"/>
    <property type="project" value="UniProtKB-KW"/>
</dbReference>
<dbReference type="GO" id="GO:0009073">
    <property type="term" value="P:aromatic amino acid family biosynthetic process"/>
    <property type="evidence" value="ECO:0007669"/>
    <property type="project" value="UniProtKB-KW"/>
</dbReference>
<dbReference type="GO" id="GO:0009423">
    <property type="term" value="P:chorismate biosynthetic process"/>
    <property type="evidence" value="ECO:0007669"/>
    <property type="project" value="UniProtKB-UniRule"/>
</dbReference>
<dbReference type="CDD" id="cd01556">
    <property type="entry name" value="EPSP_synthase"/>
    <property type="match status" value="1"/>
</dbReference>
<dbReference type="FunFam" id="3.65.10.10:FF:000005">
    <property type="entry name" value="3-phosphoshikimate 1-carboxyvinyltransferase"/>
    <property type="match status" value="1"/>
</dbReference>
<dbReference type="Gene3D" id="3.65.10.10">
    <property type="entry name" value="Enolpyruvate transferase domain"/>
    <property type="match status" value="2"/>
</dbReference>
<dbReference type="HAMAP" id="MF_00210">
    <property type="entry name" value="EPSP_synth"/>
    <property type="match status" value="1"/>
</dbReference>
<dbReference type="InterPro" id="IPR001986">
    <property type="entry name" value="Enolpyruvate_Tfrase_dom"/>
</dbReference>
<dbReference type="InterPro" id="IPR036968">
    <property type="entry name" value="Enolpyruvate_Tfrase_sf"/>
</dbReference>
<dbReference type="InterPro" id="IPR006264">
    <property type="entry name" value="EPSP_synthase"/>
</dbReference>
<dbReference type="InterPro" id="IPR023193">
    <property type="entry name" value="EPSP_synthase_CS"/>
</dbReference>
<dbReference type="InterPro" id="IPR013792">
    <property type="entry name" value="RNA3'P_cycl/enolpyr_Trfase_a/b"/>
</dbReference>
<dbReference type="NCBIfam" id="TIGR01356">
    <property type="entry name" value="aroA"/>
    <property type="match status" value="1"/>
</dbReference>
<dbReference type="PANTHER" id="PTHR21090">
    <property type="entry name" value="AROM/DEHYDROQUINATE SYNTHASE"/>
    <property type="match status" value="1"/>
</dbReference>
<dbReference type="PANTHER" id="PTHR21090:SF5">
    <property type="entry name" value="PENTAFUNCTIONAL AROM POLYPEPTIDE"/>
    <property type="match status" value="1"/>
</dbReference>
<dbReference type="Pfam" id="PF00275">
    <property type="entry name" value="EPSP_synthase"/>
    <property type="match status" value="1"/>
</dbReference>
<dbReference type="PIRSF" id="PIRSF000505">
    <property type="entry name" value="EPSPS"/>
    <property type="match status" value="1"/>
</dbReference>
<dbReference type="SUPFAM" id="SSF55205">
    <property type="entry name" value="EPT/RTPC-like"/>
    <property type="match status" value="1"/>
</dbReference>
<dbReference type="PROSITE" id="PS00885">
    <property type="entry name" value="EPSP_SYNTHASE_2"/>
    <property type="match status" value="1"/>
</dbReference>
<gene>
    <name evidence="1" type="primary">aroA</name>
    <name type="ordered locus">TT_C0088</name>
</gene>
<sequence>MDAFRLAPCGPLRGRLRVPGDKSVTHRGLMLLALAEGEGRLFYPLKAGDTLSTARVLQALGAEVREEGPHFLVRGRGLRFKEPEDVLDCGNAGTLMRLLLGLLAGQEGLFAVLTGDASLRRRPMGRVVAPLRAMGARVDGREEGERAPLAVRGAPLRGLRYTLPVPSAQVKSALLLAGLFAEGVTEVEEPTPTRDHTERLFRHFGLPLEVEGRRVRTWRTGPFPAKDLVVPGDFSSAAFFLVAALVTPGSEVVVEGVGLNPTRTGLLTVLKAMGADLEWRVLEGEAGEPVGWVRARHSLLKGVAVDPGLIPLMVDEVPVLAAAAAWAEGETYIPGLSELRVKESDRVRAIAENLRALGVEVEEGPDWLRIRGGGVRPGRVRPFHDHRIAMAFAVVGLPVGVEVEEPHWAEISYPGFFQDLLRLCAAS</sequence>
<name>AROA_THET2</name>
<organism>
    <name type="scientific">Thermus thermophilus (strain ATCC BAA-163 / DSM 7039 / HB27)</name>
    <dbReference type="NCBI Taxonomy" id="262724"/>
    <lineage>
        <taxon>Bacteria</taxon>
        <taxon>Thermotogati</taxon>
        <taxon>Deinococcota</taxon>
        <taxon>Deinococci</taxon>
        <taxon>Thermales</taxon>
        <taxon>Thermaceae</taxon>
        <taxon>Thermus</taxon>
    </lineage>
</organism>
<keyword id="KW-0028">Amino-acid biosynthesis</keyword>
<keyword id="KW-0057">Aromatic amino acid biosynthesis</keyword>
<keyword id="KW-0963">Cytoplasm</keyword>
<keyword id="KW-0808">Transferase</keyword>
<reference key="1">
    <citation type="journal article" date="2004" name="Nat. Biotechnol.">
        <title>The genome sequence of the extreme thermophile Thermus thermophilus.</title>
        <authorList>
            <person name="Henne A."/>
            <person name="Brueggemann H."/>
            <person name="Raasch C."/>
            <person name="Wiezer A."/>
            <person name="Hartsch T."/>
            <person name="Liesegang H."/>
            <person name="Johann A."/>
            <person name="Lienard T."/>
            <person name="Gohl O."/>
            <person name="Martinez-Arias R."/>
            <person name="Jacobi C."/>
            <person name="Starkuviene V."/>
            <person name="Schlenczeck S."/>
            <person name="Dencker S."/>
            <person name="Huber R."/>
            <person name="Klenk H.-P."/>
            <person name="Kramer W."/>
            <person name="Merkl R."/>
            <person name="Gottschalk G."/>
            <person name="Fritz H.-J."/>
        </authorList>
    </citation>
    <scope>NUCLEOTIDE SEQUENCE [LARGE SCALE GENOMIC DNA]</scope>
    <source>
        <strain>ATCC BAA-163 / DSM 7039 / HB27</strain>
    </source>
</reference>
<proteinExistence type="inferred from homology"/>
<accession>Q72LH1</accession>